<name>URE1_CERS4</name>
<comment type="catalytic activity">
    <reaction evidence="1">
        <text>urea + 2 H2O + H(+) = hydrogencarbonate + 2 NH4(+)</text>
        <dbReference type="Rhea" id="RHEA:20557"/>
        <dbReference type="ChEBI" id="CHEBI:15377"/>
        <dbReference type="ChEBI" id="CHEBI:15378"/>
        <dbReference type="ChEBI" id="CHEBI:16199"/>
        <dbReference type="ChEBI" id="CHEBI:17544"/>
        <dbReference type="ChEBI" id="CHEBI:28938"/>
        <dbReference type="EC" id="3.5.1.5"/>
    </reaction>
</comment>
<comment type="cofactor">
    <cofactor evidence="1">
        <name>Ni cation</name>
        <dbReference type="ChEBI" id="CHEBI:25516"/>
    </cofactor>
    <text evidence="1">Binds 2 nickel ions per subunit.</text>
</comment>
<comment type="pathway">
    <text evidence="1">Nitrogen metabolism; urea degradation; CO(2) and NH(3) from urea (urease route): step 1/1.</text>
</comment>
<comment type="subunit">
    <text evidence="1">Heterotrimer of UreA (gamma), UreB (beta) and UreC (alpha) subunits. Three heterotrimers associate to form the active enzyme.</text>
</comment>
<comment type="subcellular location">
    <subcellularLocation>
        <location evidence="1">Cytoplasm</location>
    </subcellularLocation>
</comment>
<comment type="PTM">
    <text evidence="1">Carboxylation allows a single lysine to coordinate two nickel ions.</text>
</comment>
<comment type="similarity">
    <text evidence="1">Belongs to the metallo-dependent hydrolases superfamily. Urease alpha subunit family.</text>
</comment>
<comment type="sequence caution" evidence="2">
    <conflict type="frameshift">
        <sequence resource="EMBL-CDS" id="AAF24255"/>
    </conflict>
</comment>
<dbReference type="EC" id="3.5.1.5" evidence="1"/>
<dbReference type="EMBL" id="AF195122">
    <property type="protein sequence ID" value="AAF24255.1"/>
    <property type="status" value="ALT_FRAME"/>
    <property type="molecule type" value="Genomic_DNA"/>
</dbReference>
<dbReference type="EMBL" id="CP000143">
    <property type="protein sequence ID" value="ABA79480.1"/>
    <property type="molecule type" value="Genomic_DNA"/>
</dbReference>
<dbReference type="PIR" id="T50711">
    <property type="entry name" value="T50711"/>
</dbReference>
<dbReference type="RefSeq" id="WP_011338138.1">
    <property type="nucleotide sequence ID" value="NC_007493.2"/>
</dbReference>
<dbReference type="RefSeq" id="YP_353381.1">
    <property type="nucleotide sequence ID" value="NC_007493.2"/>
</dbReference>
<dbReference type="SMR" id="Q3J154"/>
<dbReference type="STRING" id="272943.RSP_6111"/>
<dbReference type="MEROPS" id="M38.982"/>
<dbReference type="EnsemblBacteria" id="ABA79480">
    <property type="protein sequence ID" value="ABA79480"/>
    <property type="gene ID" value="RSP_6111"/>
</dbReference>
<dbReference type="GeneID" id="3719161"/>
<dbReference type="KEGG" id="rsp:RSP_6111"/>
<dbReference type="PATRIC" id="fig|272943.9.peg.2251"/>
<dbReference type="eggNOG" id="COG0804">
    <property type="taxonomic scope" value="Bacteria"/>
</dbReference>
<dbReference type="OrthoDB" id="9802793at2"/>
<dbReference type="PhylomeDB" id="Q3J154"/>
<dbReference type="UniPathway" id="UPA00258">
    <property type="reaction ID" value="UER00370"/>
</dbReference>
<dbReference type="Proteomes" id="UP000002703">
    <property type="component" value="Chromosome 1"/>
</dbReference>
<dbReference type="GO" id="GO:0005737">
    <property type="term" value="C:cytoplasm"/>
    <property type="evidence" value="ECO:0007669"/>
    <property type="project" value="UniProtKB-SubCell"/>
</dbReference>
<dbReference type="GO" id="GO:0016151">
    <property type="term" value="F:nickel cation binding"/>
    <property type="evidence" value="ECO:0007669"/>
    <property type="project" value="UniProtKB-UniRule"/>
</dbReference>
<dbReference type="GO" id="GO:0009039">
    <property type="term" value="F:urease activity"/>
    <property type="evidence" value="ECO:0007669"/>
    <property type="project" value="UniProtKB-UniRule"/>
</dbReference>
<dbReference type="GO" id="GO:0043419">
    <property type="term" value="P:urea catabolic process"/>
    <property type="evidence" value="ECO:0007669"/>
    <property type="project" value="UniProtKB-UniRule"/>
</dbReference>
<dbReference type="CDD" id="cd00375">
    <property type="entry name" value="Urease_alpha"/>
    <property type="match status" value="1"/>
</dbReference>
<dbReference type="Gene3D" id="3.20.20.140">
    <property type="entry name" value="Metal-dependent hydrolases"/>
    <property type="match status" value="1"/>
</dbReference>
<dbReference type="Gene3D" id="2.30.40.10">
    <property type="entry name" value="Urease, subunit C, domain 1"/>
    <property type="match status" value="1"/>
</dbReference>
<dbReference type="HAMAP" id="MF_01953">
    <property type="entry name" value="Urease_alpha"/>
    <property type="match status" value="1"/>
</dbReference>
<dbReference type="InterPro" id="IPR006680">
    <property type="entry name" value="Amidohydro-rel"/>
</dbReference>
<dbReference type="InterPro" id="IPR011059">
    <property type="entry name" value="Metal-dep_hydrolase_composite"/>
</dbReference>
<dbReference type="InterPro" id="IPR032466">
    <property type="entry name" value="Metal_Hydrolase"/>
</dbReference>
<dbReference type="InterPro" id="IPR011612">
    <property type="entry name" value="Urease_alpha_N_dom"/>
</dbReference>
<dbReference type="InterPro" id="IPR050112">
    <property type="entry name" value="Urease_alpha_subunit"/>
</dbReference>
<dbReference type="InterPro" id="IPR017950">
    <property type="entry name" value="Urease_AS"/>
</dbReference>
<dbReference type="InterPro" id="IPR005848">
    <property type="entry name" value="Urease_asu"/>
</dbReference>
<dbReference type="InterPro" id="IPR017951">
    <property type="entry name" value="Urease_asu_c"/>
</dbReference>
<dbReference type="InterPro" id="IPR029754">
    <property type="entry name" value="Urease_Ni-bd"/>
</dbReference>
<dbReference type="NCBIfam" id="NF009685">
    <property type="entry name" value="PRK13206.1"/>
    <property type="match status" value="1"/>
</dbReference>
<dbReference type="NCBIfam" id="NF009686">
    <property type="entry name" value="PRK13207.1"/>
    <property type="match status" value="1"/>
</dbReference>
<dbReference type="NCBIfam" id="TIGR01792">
    <property type="entry name" value="urease_alph"/>
    <property type="match status" value="1"/>
</dbReference>
<dbReference type="PANTHER" id="PTHR43440">
    <property type="entry name" value="UREASE"/>
    <property type="match status" value="1"/>
</dbReference>
<dbReference type="PANTHER" id="PTHR43440:SF1">
    <property type="entry name" value="UREASE"/>
    <property type="match status" value="1"/>
</dbReference>
<dbReference type="Pfam" id="PF01979">
    <property type="entry name" value="Amidohydro_1"/>
    <property type="match status" value="1"/>
</dbReference>
<dbReference type="Pfam" id="PF00449">
    <property type="entry name" value="Urease_alpha"/>
    <property type="match status" value="1"/>
</dbReference>
<dbReference type="PRINTS" id="PR01752">
    <property type="entry name" value="UREASE"/>
</dbReference>
<dbReference type="SUPFAM" id="SSF51338">
    <property type="entry name" value="Composite domain of metallo-dependent hydrolases"/>
    <property type="match status" value="1"/>
</dbReference>
<dbReference type="SUPFAM" id="SSF51556">
    <property type="entry name" value="Metallo-dependent hydrolases"/>
    <property type="match status" value="1"/>
</dbReference>
<dbReference type="PROSITE" id="PS01120">
    <property type="entry name" value="UREASE_1"/>
    <property type="match status" value="1"/>
</dbReference>
<dbReference type="PROSITE" id="PS00145">
    <property type="entry name" value="UREASE_2"/>
    <property type="match status" value="1"/>
</dbReference>
<dbReference type="PROSITE" id="PS51368">
    <property type="entry name" value="UREASE_3"/>
    <property type="match status" value="1"/>
</dbReference>
<organism>
    <name type="scientific">Cereibacter sphaeroides (strain ATCC 17023 / DSM 158 / JCM 6121 / CCUG 31486 / LMG 2827 / NBRC 12203 / NCIMB 8253 / ATH 2.4.1.)</name>
    <name type="common">Rhodobacter sphaeroides</name>
    <dbReference type="NCBI Taxonomy" id="272943"/>
    <lineage>
        <taxon>Bacteria</taxon>
        <taxon>Pseudomonadati</taxon>
        <taxon>Pseudomonadota</taxon>
        <taxon>Alphaproteobacteria</taxon>
        <taxon>Rhodobacterales</taxon>
        <taxon>Paracoccaceae</taxon>
        <taxon>Cereibacter</taxon>
    </lineage>
</organism>
<gene>
    <name evidence="1" type="primary">ureC</name>
    <name type="ordered locus">RHOS4_19120</name>
    <name type="ORF">RSP_6111</name>
</gene>
<proteinExistence type="inferred from homology"/>
<accession>Q3J154</accession>
<accession>Q9RFF2</accession>
<sequence>MPASISRSTYASMFGPTTGDRLRLGDTELVIEVERDLTTYGEEVKFGGGKVIRDGMGQSQRTRAEGAMDTVITNALIVDWTGIYKADVGLRDGRIAKIGKAGNPDTQPGVDIVIGPGTEIIAGEGRILTAGGMDAHIHFICPQQIEDSLHSGITTMLGGGTGPAHGTLATTCTPGPWHIGRMLQAADAFPINLAFAGKGNASLPAGLEEQVRAGASCLKLHEDWGTTPAAIDCCLSVADRMDVQVMIHTDTLNESGFVENTLAAIGGRTIHAFHTEGAGGGHAPDIIKVVGAANVIPSSTNPTMPYTANTVEEHLDMLMVCHHLDRSIPEDVAFAESRIRKETIAAEDILHDMGAFSVISSDSQAMGRVGEVITRTWQTAHKMKVQRGRLAEETGANDNQRVRRYIAKYTINPAIAHGLSRHIGSVEEGKRADLVLWQPAFFGAKPDLVLLGGMIVCAQMGDPNGSIPAQPYYSRPMFGAFGGALHASAVTFVSQAAEEDGVGERLRLQKGTLAVQGTRDIGKADMKLNAHRPSIEVNPETYEVRADGELLTCQPLAELPLAQRYFLY</sequence>
<reference key="1">
    <citation type="journal article" date="2000" name="Nucleic Acids Res.">
        <title>DNA sequence analysis of the photosynthesis region of Rhodobacter sphaeroides 2.4.1.</title>
        <authorList>
            <person name="Choudhary M."/>
            <person name="Kaplan S."/>
        </authorList>
    </citation>
    <scope>NUCLEOTIDE SEQUENCE [GENOMIC DNA]</scope>
</reference>
<reference key="2">
    <citation type="submission" date="2005-09" db="EMBL/GenBank/DDBJ databases">
        <title>Complete sequence of chromosome 1 of Rhodobacter sphaeroides 2.4.1.</title>
        <authorList>
            <person name="Copeland A."/>
            <person name="Lucas S."/>
            <person name="Lapidus A."/>
            <person name="Barry K."/>
            <person name="Detter J.C."/>
            <person name="Glavina T."/>
            <person name="Hammon N."/>
            <person name="Israni S."/>
            <person name="Pitluck S."/>
            <person name="Richardson P."/>
            <person name="Mackenzie C."/>
            <person name="Choudhary M."/>
            <person name="Larimer F."/>
            <person name="Hauser L.J."/>
            <person name="Land M."/>
            <person name="Donohue T.J."/>
            <person name="Kaplan S."/>
        </authorList>
    </citation>
    <scope>NUCLEOTIDE SEQUENCE [LARGE SCALE GENOMIC DNA]</scope>
    <source>
        <strain>ATCC 17023 / DSM 158 / JCM 6121 / CCUG 31486 / LMG 2827 / NBRC 12203 / NCIMB 8253 / ATH 2.4.1.</strain>
    </source>
</reference>
<evidence type="ECO:0000255" key="1">
    <source>
        <dbReference type="HAMAP-Rule" id="MF_01953"/>
    </source>
</evidence>
<evidence type="ECO:0000305" key="2"/>
<feature type="chain" id="PRO_0000234178" description="Urease subunit alpha">
    <location>
        <begin position="1"/>
        <end position="568"/>
    </location>
</feature>
<feature type="domain" description="Urease" evidence="1">
    <location>
        <begin position="131"/>
        <end position="568"/>
    </location>
</feature>
<feature type="active site" description="Proton donor" evidence="1">
    <location>
        <position position="322"/>
    </location>
</feature>
<feature type="binding site" evidence="1">
    <location>
        <position position="136"/>
    </location>
    <ligand>
        <name>Ni(2+)</name>
        <dbReference type="ChEBI" id="CHEBI:49786"/>
        <label>1</label>
    </ligand>
</feature>
<feature type="binding site" evidence="1">
    <location>
        <position position="138"/>
    </location>
    <ligand>
        <name>Ni(2+)</name>
        <dbReference type="ChEBI" id="CHEBI:49786"/>
        <label>1</label>
    </ligand>
</feature>
<feature type="binding site" description="via carbamate group" evidence="1">
    <location>
        <position position="219"/>
    </location>
    <ligand>
        <name>Ni(2+)</name>
        <dbReference type="ChEBI" id="CHEBI:49786"/>
        <label>1</label>
    </ligand>
</feature>
<feature type="binding site" description="via carbamate group" evidence="1">
    <location>
        <position position="219"/>
    </location>
    <ligand>
        <name>Ni(2+)</name>
        <dbReference type="ChEBI" id="CHEBI:49786"/>
        <label>2</label>
    </ligand>
</feature>
<feature type="binding site" evidence="1">
    <location>
        <position position="221"/>
    </location>
    <ligand>
        <name>substrate</name>
    </ligand>
</feature>
<feature type="binding site" evidence="1">
    <location>
        <position position="248"/>
    </location>
    <ligand>
        <name>Ni(2+)</name>
        <dbReference type="ChEBI" id="CHEBI:49786"/>
        <label>2</label>
    </ligand>
</feature>
<feature type="binding site" evidence="1">
    <location>
        <position position="274"/>
    </location>
    <ligand>
        <name>Ni(2+)</name>
        <dbReference type="ChEBI" id="CHEBI:49786"/>
        <label>2</label>
    </ligand>
</feature>
<feature type="binding site" evidence="1">
    <location>
        <position position="362"/>
    </location>
    <ligand>
        <name>Ni(2+)</name>
        <dbReference type="ChEBI" id="CHEBI:49786"/>
        <label>1</label>
    </ligand>
</feature>
<feature type="modified residue" description="N6-carboxylysine" evidence="1">
    <location>
        <position position="219"/>
    </location>
</feature>
<protein>
    <recommendedName>
        <fullName evidence="1">Urease subunit alpha</fullName>
        <ecNumber evidence="1">3.5.1.5</ecNumber>
    </recommendedName>
    <alternativeName>
        <fullName evidence="1">Urea amidohydrolase subunit alpha</fullName>
    </alternativeName>
</protein>
<keyword id="KW-0963">Cytoplasm</keyword>
<keyword id="KW-0378">Hydrolase</keyword>
<keyword id="KW-0479">Metal-binding</keyword>
<keyword id="KW-0533">Nickel</keyword>
<keyword id="KW-1185">Reference proteome</keyword>